<gene>
    <name evidence="1" type="primary">pgk</name>
    <name type="ordered locus">Mjls_2445</name>
</gene>
<organism>
    <name type="scientific">Mycobacterium sp. (strain JLS)</name>
    <dbReference type="NCBI Taxonomy" id="164757"/>
    <lineage>
        <taxon>Bacteria</taxon>
        <taxon>Bacillati</taxon>
        <taxon>Actinomycetota</taxon>
        <taxon>Actinomycetes</taxon>
        <taxon>Mycobacteriales</taxon>
        <taxon>Mycobacteriaceae</taxon>
        <taxon>Mycobacterium</taxon>
    </lineage>
</organism>
<reference key="1">
    <citation type="submission" date="2007-02" db="EMBL/GenBank/DDBJ databases">
        <title>Complete sequence of Mycobacterium sp. JLS.</title>
        <authorList>
            <consortium name="US DOE Joint Genome Institute"/>
            <person name="Copeland A."/>
            <person name="Lucas S."/>
            <person name="Lapidus A."/>
            <person name="Barry K."/>
            <person name="Detter J.C."/>
            <person name="Glavina del Rio T."/>
            <person name="Hammon N."/>
            <person name="Israni S."/>
            <person name="Dalin E."/>
            <person name="Tice H."/>
            <person name="Pitluck S."/>
            <person name="Chain P."/>
            <person name="Malfatti S."/>
            <person name="Shin M."/>
            <person name="Vergez L."/>
            <person name="Schmutz J."/>
            <person name="Larimer F."/>
            <person name="Land M."/>
            <person name="Hauser L."/>
            <person name="Kyrpides N."/>
            <person name="Mikhailova N."/>
            <person name="Miller C.D."/>
            <person name="Anderson A.J."/>
            <person name="Sims R.C."/>
            <person name="Richardson P."/>
        </authorList>
    </citation>
    <scope>NUCLEOTIDE SEQUENCE [LARGE SCALE GENOMIC DNA]</scope>
    <source>
        <strain>JLS</strain>
    </source>
</reference>
<dbReference type="EC" id="2.7.2.3" evidence="1"/>
<dbReference type="EMBL" id="CP000580">
    <property type="protein sequence ID" value="ABN98229.1"/>
    <property type="molecule type" value="Genomic_DNA"/>
</dbReference>
<dbReference type="SMR" id="A3PZA2"/>
<dbReference type="KEGG" id="mjl:Mjls_2445"/>
<dbReference type="HOGENOM" id="CLU_025427_0_2_11"/>
<dbReference type="BioCyc" id="MSP164757:G1G8C-2464-MONOMER"/>
<dbReference type="UniPathway" id="UPA00109">
    <property type="reaction ID" value="UER00185"/>
</dbReference>
<dbReference type="GO" id="GO:0005829">
    <property type="term" value="C:cytosol"/>
    <property type="evidence" value="ECO:0007669"/>
    <property type="project" value="TreeGrafter"/>
</dbReference>
<dbReference type="GO" id="GO:0043531">
    <property type="term" value="F:ADP binding"/>
    <property type="evidence" value="ECO:0007669"/>
    <property type="project" value="TreeGrafter"/>
</dbReference>
<dbReference type="GO" id="GO:0005524">
    <property type="term" value="F:ATP binding"/>
    <property type="evidence" value="ECO:0007669"/>
    <property type="project" value="UniProtKB-KW"/>
</dbReference>
<dbReference type="GO" id="GO:0004618">
    <property type="term" value="F:phosphoglycerate kinase activity"/>
    <property type="evidence" value="ECO:0007669"/>
    <property type="project" value="UniProtKB-UniRule"/>
</dbReference>
<dbReference type="GO" id="GO:0006094">
    <property type="term" value="P:gluconeogenesis"/>
    <property type="evidence" value="ECO:0007669"/>
    <property type="project" value="TreeGrafter"/>
</dbReference>
<dbReference type="GO" id="GO:0006096">
    <property type="term" value="P:glycolytic process"/>
    <property type="evidence" value="ECO:0007669"/>
    <property type="project" value="UniProtKB-UniRule"/>
</dbReference>
<dbReference type="CDD" id="cd00318">
    <property type="entry name" value="Phosphoglycerate_kinase"/>
    <property type="match status" value="1"/>
</dbReference>
<dbReference type="FunFam" id="3.40.50.1260:FF:000006">
    <property type="entry name" value="Phosphoglycerate kinase"/>
    <property type="match status" value="1"/>
</dbReference>
<dbReference type="FunFam" id="3.40.50.1260:FF:000031">
    <property type="entry name" value="Phosphoglycerate kinase 1"/>
    <property type="match status" value="1"/>
</dbReference>
<dbReference type="Gene3D" id="3.40.50.1260">
    <property type="entry name" value="Phosphoglycerate kinase, N-terminal domain"/>
    <property type="match status" value="2"/>
</dbReference>
<dbReference type="HAMAP" id="MF_00145">
    <property type="entry name" value="Phosphoglyc_kinase"/>
    <property type="match status" value="1"/>
</dbReference>
<dbReference type="InterPro" id="IPR001576">
    <property type="entry name" value="Phosphoglycerate_kinase"/>
</dbReference>
<dbReference type="InterPro" id="IPR015911">
    <property type="entry name" value="Phosphoglycerate_kinase_CS"/>
</dbReference>
<dbReference type="InterPro" id="IPR015824">
    <property type="entry name" value="Phosphoglycerate_kinase_N"/>
</dbReference>
<dbReference type="InterPro" id="IPR036043">
    <property type="entry name" value="Phosphoglycerate_kinase_sf"/>
</dbReference>
<dbReference type="PANTHER" id="PTHR11406">
    <property type="entry name" value="PHOSPHOGLYCERATE KINASE"/>
    <property type="match status" value="1"/>
</dbReference>
<dbReference type="PANTHER" id="PTHR11406:SF23">
    <property type="entry name" value="PHOSPHOGLYCERATE KINASE 1, CHLOROPLASTIC-RELATED"/>
    <property type="match status" value="1"/>
</dbReference>
<dbReference type="Pfam" id="PF00162">
    <property type="entry name" value="PGK"/>
    <property type="match status" value="1"/>
</dbReference>
<dbReference type="PIRSF" id="PIRSF000724">
    <property type="entry name" value="Pgk"/>
    <property type="match status" value="1"/>
</dbReference>
<dbReference type="PRINTS" id="PR00477">
    <property type="entry name" value="PHGLYCKINASE"/>
</dbReference>
<dbReference type="SUPFAM" id="SSF53748">
    <property type="entry name" value="Phosphoglycerate kinase"/>
    <property type="match status" value="1"/>
</dbReference>
<dbReference type="PROSITE" id="PS00111">
    <property type="entry name" value="PGLYCERATE_KINASE"/>
    <property type="match status" value="1"/>
</dbReference>
<sequence>MAVKTLEDLLNDGDREIAGRGVLVRSDLNVPLDDNGAITDPGRIIASVPTLEALAEAGAKVIVTAHLGRPKGGPDPKYSLKPVAAALSEKLGRHVQLAGDVVGTDALARAEGLTDGDVLLLENIRFDPRETSKDDGERRKLAEALVELVGDDGAFVSDGFGVVHRKQASVYDIATLLPHYAGTLVAAEVKVLEQLTSSTDRPYAVVLGGSKVSDKLAVIESLAKKADSLVIGGGMCFTFLASQGVSVGKSLVQPEMIDTCRELLDTYGDVIHLPVDIVVAPEFSADAEPETVAADRIPEDKMGLDIGPESVKRFTNLLSNARTVFWNGPMGVFEFPAFAAGTKGVAEAIIGATAKGAFSVVGGGDSAAAVRQLGLAEDGFSHISTGGGASLEYLEGKELPGIQVLES</sequence>
<keyword id="KW-0067">ATP-binding</keyword>
<keyword id="KW-0963">Cytoplasm</keyword>
<keyword id="KW-0324">Glycolysis</keyword>
<keyword id="KW-0418">Kinase</keyword>
<keyword id="KW-0547">Nucleotide-binding</keyword>
<keyword id="KW-0808">Transferase</keyword>
<evidence type="ECO:0000255" key="1">
    <source>
        <dbReference type="HAMAP-Rule" id="MF_00145"/>
    </source>
</evidence>
<comment type="catalytic activity">
    <reaction evidence="1">
        <text>(2R)-3-phosphoglycerate + ATP = (2R)-3-phospho-glyceroyl phosphate + ADP</text>
        <dbReference type="Rhea" id="RHEA:14801"/>
        <dbReference type="ChEBI" id="CHEBI:30616"/>
        <dbReference type="ChEBI" id="CHEBI:57604"/>
        <dbReference type="ChEBI" id="CHEBI:58272"/>
        <dbReference type="ChEBI" id="CHEBI:456216"/>
        <dbReference type="EC" id="2.7.2.3"/>
    </reaction>
</comment>
<comment type="pathway">
    <text evidence="1">Carbohydrate degradation; glycolysis; pyruvate from D-glyceraldehyde 3-phosphate: step 2/5.</text>
</comment>
<comment type="subunit">
    <text evidence="1">Monomer.</text>
</comment>
<comment type="subcellular location">
    <subcellularLocation>
        <location evidence="1">Cytoplasm</location>
    </subcellularLocation>
</comment>
<comment type="similarity">
    <text evidence="1">Belongs to the phosphoglycerate kinase family.</text>
</comment>
<proteinExistence type="inferred from homology"/>
<name>PGK_MYCSJ</name>
<feature type="chain" id="PRO_1000009632" description="Phosphoglycerate kinase">
    <location>
        <begin position="1"/>
        <end position="407"/>
    </location>
</feature>
<feature type="binding site" evidence="1">
    <location>
        <begin position="27"/>
        <end position="29"/>
    </location>
    <ligand>
        <name>substrate</name>
    </ligand>
</feature>
<feature type="binding site" evidence="1">
    <location>
        <position position="43"/>
    </location>
    <ligand>
        <name>substrate</name>
    </ligand>
</feature>
<feature type="binding site" evidence="1">
    <location>
        <begin position="66"/>
        <end position="69"/>
    </location>
    <ligand>
        <name>substrate</name>
    </ligand>
</feature>
<feature type="binding site" evidence="1">
    <location>
        <position position="125"/>
    </location>
    <ligand>
        <name>substrate</name>
    </ligand>
</feature>
<feature type="binding site" evidence="1">
    <location>
        <position position="165"/>
    </location>
    <ligand>
        <name>substrate</name>
    </ligand>
</feature>
<feature type="binding site" evidence="1">
    <location>
        <position position="215"/>
    </location>
    <ligand>
        <name>ATP</name>
        <dbReference type="ChEBI" id="CHEBI:30616"/>
    </ligand>
</feature>
<feature type="binding site" evidence="1">
    <location>
        <position position="303"/>
    </location>
    <ligand>
        <name>ATP</name>
        <dbReference type="ChEBI" id="CHEBI:30616"/>
    </ligand>
</feature>
<feature type="binding site" evidence="1">
    <location>
        <position position="334"/>
    </location>
    <ligand>
        <name>ATP</name>
        <dbReference type="ChEBI" id="CHEBI:30616"/>
    </ligand>
</feature>
<feature type="binding site" evidence="1">
    <location>
        <begin position="363"/>
        <end position="366"/>
    </location>
    <ligand>
        <name>ATP</name>
        <dbReference type="ChEBI" id="CHEBI:30616"/>
    </ligand>
</feature>
<accession>A3PZA2</accession>
<protein>
    <recommendedName>
        <fullName evidence="1">Phosphoglycerate kinase</fullName>
        <ecNumber evidence="1">2.7.2.3</ecNumber>
    </recommendedName>
</protein>